<keyword id="KW-0997">Cell inner membrane</keyword>
<keyword id="KW-1003">Cell membrane</keyword>
<keyword id="KW-0472">Membrane</keyword>
<keyword id="KW-0653">Protein transport</keyword>
<keyword id="KW-1185">Reference proteome</keyword>
<keyword id="KW-0811">Translocation</keyword>
<keyword id="KW-0812">Transmembrane</keyword>
<keyword id="KW-1133">Transmembrane helix</keyword>
<keyword id="KW-0813">Transport</keyword>
<proteinExistence type="inferred from homology"/>
<organism>
    <name type="scientific">Bradyrhizobium sp. (strain ORS 278)</name>
    <dbReference type="NCBI Taxonomy" id="114615"/>
    <lineage>
        <taxon>Bacteria</taxon>
        <taxon>Pseudomonadati</taxon>
        <taxon>Pseudomonadota</taxon>
        <taxon>Alphaproteobacteria</taxon>
        <taxon>Hyphomicrobiales</taxon>
        <taxon>Nitrobacteraceae</taxon>
        <taxon>Bradyrhizobium</taxon>
    </lineage>
</organism>
<reference key="1">
    <citation type="journal article" date="2007" name="Science">
        <title>Legumes symbioses: absence of nod genes in photosynthetic bradyrhizobia.</title>
        <authorList>
            <person name="Giraud E."/>
            <person name="Moulin L."/>
            <person name="Vallenet D."/>
            <person name="Barbe V."/>
            <person name="Cytryn E."/>
            <person name="Avarre J.-C."/>
            <person name="Jaubert M."/>
            <person name="Simon D."/>
            <person name="Cartieaux F."/>
            <person name="Prin Y."/>
            <person name="Bena G."/>
            <person name="Hannibal L."/>
            <person name="Fardoux J."/>
            <person name="Kojadinovic M."/>
            <person name="Vuillet L."/>
            <person name="Lajus A."/>
            <person name="Cruveiller S."/>
            <person name="Rouy Z."/>
            <person name="Mangenot S."/>
            <person name="Segurens B."/>
            <person name="Dossat C."/>
            <person name="Franck W.L."/>
            <person name="Chang W.-S."/>
            <person name="Saunders E."/>
            <person name="Bruce D."/>
            <person name="Richardson P."/>
            <person name="Normand P."/>
            <person name="Dreyfus B."/>
            <person name="Pignol D."/>
            <person name="Stacey G."/>
            <person name="Emerich D."/>
            <person name="Vermeglio A."/>
            <person name="Medigue C."/>
            <person name="Sadowsky M."/>
        </authorList>
    </citation>
    <scope>NUCLEOTIDE SEQUENCE [LARGE SCALE GENOMIC DNA]</scope>
    <source>
        <strain>ORS 278</strain>
    </source>
</reference>
<sequence length="178" mass="19053">MFDIGWSELLVIGVVALIAIGPKELPGVLRMVGQWMGKARRMASEFQGQFQEAMREAEMADLKKSFDEVKEAASGFSPAGMMSSLQRDVDKALDIEGVDKPAEPVIATSPEPVASVETPVTPTTPEPPHAETFVEAEAHQAVGEPLAIVREIKPEPQPQPADGAAPAEPERLKDAKAS</sequence>
<evidence type="ECO:0000255" key="1">
    <source>
        <dbReference type="HAMAP-Rule" id="MF_00237"/>
    </source>
</evidence>
<evidence type="ECO:0000256" key="2">
    <source>
        <dbReference type="SAM" id="MobiDB-lite"/>
    </source>
</evidence>
<protein>
    <recommendedName>
        <fullName evidence="1">Sec-independent protein translocase protein TatB</fullName>
    </recommendedName>
</protein>
<feature type="chain" id="PRO_0000301148" description="Sec-independent protein translocase protein TatB">
    <location>
        <begin position="1"/>
        <end position="178"/>
    </location>
</feature>
<feature type="transmembrane region" description="Helical" evidence="1">
    <location>
        <begin position="1"/>
        <end position="21"/>
    </location>
</feature>
<feature type="region of interest" description="Disordered" evidence="2">
    <location>
        <begin position="146"/>
        <end position="178"/>
    </location>
</feature>
<feature type="compositionally biased region" description="Basic and acidic residues" evidence="2">
    <location>
        <begin position="168"/>
        <end position="178"/>
    </location>
</feature>
<name>TATB_BRASO</name>
<accession>A4YV72</accession>
<gene>
    <name evidence="1" type="primary">tatB</name>
    <name type="ordered locus">BRADO4046</name>
</gene>
<dbReference type="EMBL" id="CU234118">
    <property type="protein sequence ID" value="CAL77798.1"/>
    <property type="molecule type" value="Genomic_DNA"/>
</dbReference>
<dbReference type="RefSeq" id="WP_011926932.1">
    <property type="nucleotide sequence ID" value="NC_009445.1"/>
</dbReference>
<dbReference type="SMR" id="A4YV72"/>
<dbReference type="STRING" id="114615.BRADO4046"/>
<dbReference type="KEGG" id="bra:BRADO4046"/>
<dbReference type="eggNOG" id="COG1826">
    <property type="taxonomic scope" value="Bacteria"/>
</dbReference>
<dbReference type="HOGENOM" id="CLU_086034_1_3_5"/>
<dbReference type="OrthoDB" id="7206969at2"/>
<dbReference type="Proteomes" id="UP000001994">
    <property type="component" value="Chromosome"/>
</dbReference>
<dbReference type="GO" id="GO:0033281">
    <property type="term" value="C:TAT protein transport complex"/>
    <property type="evidence" value="ECO:0007669"/>
    <property type="project" value="UniProtKB-UniRule"/>
</dbReference>
<dbReference type="GO" id="GO:0008320">
    <property type="term" value="F:protein transmembrane transporter activity"/>
    <property type="evidence" value="ECO:0007669"/>
    <property type="project" value="UniProtKB-UniRule"/>
</dbReference>
<dbReference type="GO" id="GO:0043953">
    <property type="term" value="P:protein transport by the Tat complex"/>
    <property type="evidence" value="ECO:0007669"/>
    <property type="project" value="UniProtKB-UniRule"/>
</dbReference>
<dbReference type="Gene3D" id="1.20.5.3310">
    <property type="match status" value="1"/>
</dbReference>
<dbReference type="HAMAP" id="MF_00237">
    <property type="entry name" value="TatB"/>
    <property type="match status" value="1"/>
</dbReference>
<dbReference type="InterPro" id="IPR018448">
    <property type="entry name" value="TatB"/>
</dbReference>
<dbReference type="NCBIfam" id="TIGR01410">
    <property type="entry name" value="tatB"/>
    <property type="match status" value="1"/>
</dbReference>
<dbReference type="PANTHER" id="PTHR33162">
    <property type="entry name" value="SEC-INDEPENDENT PROTEIN TRANSLOCASE PROTEIN TATA, CHLOROPLASTIC"/>
    <property type="match status" value="1"/>
</dbReference>
<dbReference type="PANTHER" id="PTHR33162:SF1">
    <property type="entry name" value="SEC-INDEPENDENT PROTEIN TRANSLOCASE PROTEIN TATA, CHLOROPLASTIC"/>
    <property type="match status" value="1"/>
</dbReference>
<dbReference type="PRINTS" id="PR01506">
    <property type="entry name" value="TATBPROTEIN"/>
</dbReference>
<comment type="function">
    <text evidence="1">Part of the twin-arginine translocation (Tat) system that transports large folded proteins containing a characteristic twin-arginine motif in their signal peptide across membranes. Together with TatC, TatB is part of a receptor directly interacting with Tat signal peptides. TatB may form an oligomeric binding site that transiently accommodates folded Tat precursor proteins before their translocation.</text>
</comment>
<comment type="subunit">
    <text evidence="1">The Tat system comprises two distinct complexes: a TatABC complex, containing multiple copies of TatA, TatB and TatC subunits, and a separate TatA complex, containing only TatA subunits. Substrates initially bind to the TatABC complex, which probably triggers association of the separate TatA complex to form the active translocon.</text>
</comment>
<comment type="subcellular location">
    <subcellularLocation>
        <location evidence="1">Cell inner membrane</location>
        <topology evidence="1">Single-pass membrane protein</topology>
    </subcellularLocation>
</comment>
<comment type="similarity">
    <text evidence="1">Belongs to the TatB family.</text>
</comment>